<evidence type="ECO:0000255" key="1">
    <source>
        <dbReference type="HAMAP-Rule" id="MF_00355"/>
    </source>
</evidence>
<keyword id="KW-0004">4Fe-4S</keyword>
<keyword id="KW-0067">ATP-binding</keyword>
<keyword id="KW-0077">Bacteriochlorophyll biosynthesis</keyword>
<keyword id="KW-0149">Chlorophyll biosynthesis</keyword>
<keyword id="KW-0408">Iron</keyword>
<keyword id="KW-0411">Iron-sulfur</keyword>
<keyword id="KW-0460">Magnesium</keyword>
<keyword id="KW-0479">Metal-binding</keyword>
<keyword id="KW-0547">Nucleotide-binding</keyword>
<keyword id="KW-0560">Oxidoreductase</keyword>
<keyword id="KW-0602">Photosynthesis</keyword>
<accession>A4WR94</accession>
<comment type="function">
    <text evidence="1">Component of the dark-operative protochlorophyllide reductase (DPOR) that uses Mg-ATP and reduced ferredoxin to reduce ring D of protochlorophyllide (Pchlide) to form chlorophyllide a (Chlide). This reaction is light-independent. The L component serves as a unique electron donor to the NB-component of the complex, and binds Mg-ATP.</text>
</comment>
<comment type="catalytic activity">
    <reaction evidence="1">
        <text>chlorophyllide a + oxidized 2[4Fe-4S]-[ferredoxin] + 2 ADP + 2 phosphate = protochlorophyllide a + reduced 2[4Fe-4S]-[ferredoxin] + 2 ATP + 2 H2O</text>
        <dbReference type="Rhea" id="RHEA:28202"/>
        <dbReference type="Rhea" id="RHEA-COMP:10002"/>
        <dbReference type="Rhea" id="RHEA-COMP:10004"/>
        <dbReference type="ChEBI" id="CHEBI:15377"/>
        <dbReference type="ChEBI" id="CHEBI:30616"/>
        <dbReference type="ChEBI" id="CHEBI:33722"/>
        <dbReference type="ChEBI" id="CHEBI:33723"/>
        <dbReference type="ChEBI" id="CHEBI:43474"/>
        <dbReference type="ChEBI" id="CHEBI:83348"/>
        <dbReference type="ChEBI" id="CHEBI:83350"/>
        <dbReference type="ChEBI" id="CHEBI:456216"/>
        <dbReference type="EC" id="1.3.7.7"/>
    </reaction>
</comment>
<comment type="cofactor">
    <cofactor evidence="1">
        <name>[4Fe-4S] cluster</name>
        <dbReference type="ChEBI" id="CHEBI:49883"/>
    </cofactor>
    <text evidence="1">Binds 1 [4Fe-4S] cluster per dimer.</text>
</comment>
<comment type="pathway">
    <text evidence="1">Porphyrin-containing compound metabolism; bacteriochlorophyll biosynthesis (light-independent).</text>
</comment>
<comment type="subunit">
    <text evidence="1">Homodimer. Protochlorophyllide reductase is composed of three subunits; BchL, BchN and BchB.</text>
</comment>
<comment type="similarity">
    <text evidence="1">Belongs to the NifH/BchL/ChlL family.</text>
</comment>
<sequence length="297" mass="32182">MSPKDLTIPTGEDGEGSVQVHLDESDKITGAKVFAVYGKGGIGKSTTSSNLSAAFSILGKRVLQIGCDPKHDSTFTLTGSLVPTVIDVLKDVDFHPEELRPEDFVFEGFNGVMCVEAGGPPAGTGCGGYVVGQTVKLLKQHHLLDDTDVVIFDVLGDVVCGGFAAPLQHADQAVVVTANDFDSIYAMNRIIAAVQAKSKNYKVRLAGCVANRSRATDEVDRFCEASDFRRLAHMPDLDAIRRSRLKKKTLFAMDEDPDVLVARAEYLRLAQSLWDGLPPMSPHSLPDREIFELLGFD</sequence>
<name>BCHL_CERS5</name>
<feature type="chain" id="PRO_1000048467" description="Light-independent protochlorophyllide reductase iron-sulfur ATP-binding protein">
    <location>
        <begin position="1"/>
        <end position="297"/>
    </location>
</feature>
<feature type="binding site" evidence="1">
    <location>
        <begin position="41"/>
        <end position="46"/>
    </location>
    <ligand>
        <name>ATP</name>
        <dbReference type="ChEBI" id="CHEBI:30616"/>
    </ligand>
</feature>
<feature type="binding site" evidence="1">
    <location>
        <position position="45"/>
    </location>
    <ligand>
        <name>Mg(2+)</name>
        <dbReference type="ChEBI" id="CHEBI:18420"/>
    </ligand>
</feature>
<feature type="binding site" evidence="1">
    <location>
        <position position="70"/>
    </location>
    <ligand>
        <name>ATP</name>
        <dbReference type="ChEBI" id="CHEBI:30616"/>
    </ligand>
</feature>
<feature type="binding site" evidence="1">
    <location>
        <position position="126"/>
    </location>
    <ligand>
        <name>[4Fe-4S] cluster</name>
        <dbReference type="ChEBI" id="CHEBI:49883"/>
        <note>ligand shared between dimeric partners</note>
    </ligand>
</feature>
<feature type="binding site" evidence="1">
    <location>
        <position position="160"/>
    </location>
    <ligand>
        <name>[4Fe-4S] cluster</name>
        <dbReference type="ChEBI" id="CHEBI:49883"/>
        <note>ligand shared between dimeric partners</note>
    </ligand>
</feature>
<feature type="binding site" evidence="1">
    <location>
        <begin position="211"/>
        <end position="212"/>
    </location>
    <ligand>
        <name>ATP</name>
        <dbReference type="ChEBI" id="CHEBI:30616"/>
    </ligand>
</feature>
<feature type="binding site" evidence="1">
    <location>
        <begin position="235"/>
        <end position="237"/>
    </location>
    <ligand>
        <name>ATP</name>
        <dbReference type="ChEBI" id="CHEBI:30616"/>
    </ligand>
</feature>
<dbReference type="EC" id="1.3.7.7" evidence="1"/>
<dbReference type="EMBL" id="CP000661">
    <property type="protein sequence ID" value="ABP69908.1"/>
    <property type="molecule type" value="Genomic_DNA"/>
</dbReference>
<dbReference type="SMR" id="A4WR94"/>
<dbReference type="STRING" id="349102.Rsph17025_1007"/>
<dbReference type="KEGG" id="rsq:Rsph17025_1007"/>
<dbReference type="eggNOG" id="COG1348">
    <property type="taxonomic scope" value="Bacteria"/>
</dbReference>
<dbReference type="HOGENOM" id="CLU_059373_2_0_5"/>
<dbReference type="BioCyc" id="RSPH349102:G1G8M-1033-MONOMER"/>
<dbReference type="UniPathway" id="UPA00671"/>
<dbReference type="GO" id="GO:0051539">
    <property type="term" value="F:4 iron, 4 sulfur cluster binding"/>
    <property type="evidence" value="ECO:0007669"/>
    <property type="project" value="UniProtKB-UniRule"/>
</dbReference>
<dbReference type="GO" id="GO:0005524">
    <property type="term" value="F:ATP binding"/>
    <property type="evidence" value="ECO:0007669"/>
    <property type="project" value="UniProtKB-UniRule"/>
</dbReference>
<dbReference type="GO" id="GO:0046872">
    <property type="term" value="F:metal ion binding"/>
    <property type="evidence" value="ECO:0007669"/>
    <property type="project" value="UniProtKB-KW"/>
</dbReference>
<dbReference type="GO" id="GO:0016730">
    <property type="term" value="F:oxidoreductase activity, acting on iron-sulfur proteins as donors"/>
    <property type="evidence" value="ECO:0007669"/>
    <property type="project" value="InterPro"/>
</dbReference>
<dbReference type="GO" id="GO:0016636">
    <property type="term" value="F:oxidoreductase activity, acting on the CH-CH group of donors, iron-sulfur protein as acceptor"/>
    <property type="evidence" value="ECO:0007669"/>
    <property type="project" value="UniProtKB-UniRule"/>
</dbReference>
<dbReference type="GO" id="GO:0036070">
    <property type="term" value="P:light-independent bacteriochlorophyll biosynthetic process"/>
    <property type="evidence" value="ECO:0007669"/>
    <property type="project" value="UniProtKB-UniRule"/>
</dbReference>
<dbReference type="GO" id="GO:0019685">
    <property type="term" value="P:photosynthesis, dark reaction"/>
    <property type="evidence" value="ECO:0007669"/>
    <property type="project" value="InterPro"/>
</dbReference>
<dbReference type="CDD" id="cd02032">
    <property type="entry name" value="Bchl-like"/>
    <property type="match status" value="1"/>
</dbReference>
<dbReference type="Gene3D" id="3.40.50.300">
    <property type="entry name" value="P-loop containing nucleotide triphosphate hydrolases"/>
    <property type="match status" value="1"/>
</dbReference>
<dbReference type="HAMAP" id="MF_00355">
    <property type="entry name" value="ChlL_BchL"/>
    <property type="match status" value="1"/>
</dbReference>
<dbReference type="InterPro" id="IPR030655">
    <property type="entry name" value="NifH/chlL_CS"/>
</dbReference>
<dbReference type="InterPro" id="IPR000392">
    <property type="entry name" value="NifH/frxC"/>
</dbReference>
<dbReference type="InterPro" id="IPR027417">
    <property type="entry name" value="P-loop_NTPase"/>
</dbReference>
<dbReference type="InterPro" id="IPR005971">
    <property type="entry name" value="Protochlorophyllide_ATP-bd"/>
</dbReference>
<dbReference type="NCBIfam" id="TIGR01281">
    <property type="entry name" value="DPOR_bchL"/>
    <property type="match status" value="1"/>
</dbReference>
<dbReference type="PANTHER" id="PTHR42864">
    <property type="entry name" value="LIGHT-INDEPENDENT PROTOCHLOROPHYLLIDE REDUCTASE IRON-SULFUR ATP-BINDING PROTEIN"/>
    <property type="match status" value="1"/>
</dbReference>
<dbReference type="PANTHER" id="PTHR42864:SF2">
    <property type="entry name" value="LIGHT-INDEPENDENT PROTOCHLOROPHYLLIDE REDUCTASE IRON-SULFUR ATP-BINDING PROTEIN"/>
    <property type="match status" value="1"/>
</dbReference>
<dbReference type="Pfam" id="PF00142">
    <property type="entry name" value="Fer4_NifH"/>
    <property type="match status" value="1"/>
</dbReference>
<dbReference type="PIRSF" id="PIRSF000363">
    <property type="entry name" value="Nitrogenase_iron"/>
    <property type="match status" value="1"/>
</dbReference>
<dbReference type="PRINTS" id="PR00091">
    <property type="entry name" value="NITROGNASEII"/>
</dbReference>
<dbReference type="SUPFAM" id="SSF52540">
    <property type="entry name" value="P-loop containing nucleoside triphosphate hydrolases"/>
    <property type="match status" value="1"/>
</dbReference>
<dbReference type="PROSITE" id="PS00746">
    <property type="entry name" value="NIFH_FRXC_1"/>
    <property type="match status" value="1"/>
</dbReference>
<dbReference type="PROSITE" id="PS00692">
    <property type="entry name" value="NIFH_FRXC_2"/>
    <property type="match status" value="1"/>
</dbReference>
<dbReference type="PROSITE" id="PS51026">
    <property type="entry name" value="NIFH_FRXC_3"/>
    <property type="match status" value="1"/>
</dbReference>
<gene>
    <name evidence="1" type="primary">bchL</name>
    <name type="ordered locus">Rsph17025_1007</name>
</gene>
<organism>
    <name type="scientific">Cereibacter sphaeroides (strain ATCC 17025 / ATH 2.4.3)</name>
    <name type="common">Rhodobacter sphaeroides</name>
    <dbReference type="NCBI Taxonomy" id="349102"/>
    <lineage>
        <taxon>Bacteria</taxon>
        <taxon>Pseudomonadati</taxon>
        <taxon>Pseudomonadota</taxon>
        <taxon>Alphaproteobacteria</taxon>
        <taxon>Rhodobacterales</taxon>
        <taxon>Paracoccaceae</taxon>
        <taxon>Cereibacter</taxon>
    </lineage>
</organism>
<protein>
    <recommendedName>
        <fullName evidence="1">Light-independent protochlorophyllide reductase iron-sulfur ATP-binding protein</fullName>
        <shortName evidence="1">DPOR subunit L</shortName>
        <shortName evidence="1">LI-POR subunit L</shortName>
        <ecNumber evidence="1">1.3.7.7</ecNumber>
    </recommendedName>
</protein>
<reference key="1">
    <citation type="submission" date="2007-04" db="EMBL/GenBank/DDBJ databases">
        <title>Complete sequence of chromosome of Rhodobacter sphaeroides ATCC 17025.</title>
        <authorList>
            <consortium name="US DOE Joint Genome Institute"/>
            <person name="Copeland A."/>
            <person name="Lucas S."/>
            <person name="Lapidus A."/>
            <person name="Barry K."/>
            <person name="Detter J.C."/>
            <person name="Glavina del Rio T."/>
            <person name="Hammon N."/>
            <person name="Israni S."/>
            <person name="Dalin E."/>
            <person name="Tice H."/>
            <person name="Pitluck S."/>
            <person name="Chertkov O."/>
            <person name="Brettin T."/>
            <person name="Bruce D."/>
            <person name="Han C."/>
            <person name="Schmutz J."/>
            <person name="Larimer F."/>
            <person name="Land M."/>
            <person name="Hauser L."/>
            <person name="Kyrpides N."/>
            <person name="Kim E."/>
            <person name="Richardson P."/>
            <person name="Mackenzie C."/>
            <person name="Choudhary M."/>
            <person name="Donohue T.J."/>
            <person name="Kaplan S."/>
        </authorList>
    </citation>
    <scope>NUCLEOTIDE SEQUENCE [LARGE SCALE GENOMIC DNA]</scope>
    <source>
        <strain>ATCC 17025 / ATH 2.4.3</strain>
    </source>
</reference>
<proteinExistence type="inferred from homology"/>